<dbReference type="EMBL" id="X65159">
    <property type="protein sequence ID" value="CAA46277.1"/>
    <property type="molecule type" value="Genomic_DNA"/>
</dbReference>
<dbReference type="EMBL" id="BA000022">
    <property type="protein sequence ID" value="BAA18663.1"/>
    <property type="molecule type" value="Genomic_DNA"/>
</dbReference>
<dbReference type="PIR" id="S76751">
    <property type="entry name" value="S76751"/>
</dbReference>
<dbReference type="SMR" id="P28371"/>
<dbReference type="IntAct" id="P28371">
    <property type="interactions" value="3"/>
</dbReference>
<dbReference type="STRING" id="1148.gene:10500429"/>
<dbReference type="PaxDb" id="1148-1653752"/>
<dbReference type="EnsemblBacteria" id="BAA18663">
    <property type="protein sequence ID" value="BAA18663"/>
    <property type="gene ID" value="BAA18663"/>
</dbReference>
<dbReference type="KEGG" id="syn:slr1463"/>
<dbReference type="eggNOG" id="COG0480">
    <property type="taxonomic scope" value="Bacteria"/>
</dbReference>
<dbReference type="InParanoid" id="P28371"/>
<dbReference type="PhylomeDB" id="P28371"/>
<dbReference type="Proteomes" id="UP000001425">
    <property type="component" value="Chromosome"/>
</dbReference>
<dbReference type="GO" id="GO:0005737">
    <property type="term" value="C:cytoplasm"/>
    <property type="evidence" value="ECO:0007669"/>
    <property type="project" value="UniProtKB-SubCell"/>
</dbReference>
<dbReference type="GO" id="GO:0005525">
    <property type="term" value="F:GTP binding"/>
    <property type="evidence" value="ECO:0007669"/>
    <property type="project" value="UniProtKB-UniRule"/>
</dbReference>
<dbReference type="GO" id="GO:0003924">
    <property type="term" value="F:GTPase activity"/>
    <property type="evidence" value="ECO:0007669"/>
    <property type="project" value="InterPro"/>
</dbReference>
<dbReference type="GO" id="GO:0003746">
    <property type="term" value="F:translation elongation factor activity"/>
    <property type="evidence" value="ECO:0007669"/>
    <property type="project" value="UniProtKB-UniRule"/>
</dbReference>
<dbReference type="GO" id="GO:0032790">
    <property type="term" value="P:ribosome disassembly"/>
    <property type="evidence" value="ECO:0000318"/>
    <property type="project" value="GO_Central"/>
</dbReference>
<dbReference type="CDD" id="cd01886">
    <property type="entry name" value="EF-G"/>
    <property type="match status" value="1"/>
</dbReference>
<dbReference type="CDD" id="cd16262">
    <property type="entry name" value="EFG_III"/>
    <property type="match status" value="1"/>
</dbReference>
<dbReference type="CDD" id="cd01434">
    <property type="entry name" value="EFG_mtEFG1_IV"/>
    <property type="match status" value="1"/>
</dbReference>
<dbReference type="CDD" id="cd03713">
    <property type="entry name" value="EFG_mtEFG_C"/>
    <property type="match status" value="1"/>
</dbReference>
<dbReference type="CDD" id="cd04088">
    <property type="entry name" value="EFG_mtEFG_II"/>
    <property type="match status" value="1"/>
</dbReference>
<dbReference type="FunFam" id="2.40.30.10:FF:000006">
    <property type="entry name" value="Elongation factor G"/>
    <property type="match status" value="1"/>
</dbReference>
<dbReference type="FunFam" id="3.30.230.10:FF:000003">
    <property type="entry name" value="Elongation factor G"/>
    <property type="match status" value="1"/>
</dbReference>
<dbReference type="FunFam" id="3.30.70.240:FF:000001">
    <property type="entry name" value="Elongation factor G"/>
    <property type="match status" value="1"/>
</dbReference>
<dbReference type="FunFam" id="3.30.70.870:FF:000001">
    <property type="entry name" value="Elongation factor G"/>
    <property type="match status" value="1"/>
</dbReference>
<dbReference type="FunFam" id="3.40.50.300:FF:000029">
    <property type="entry name" value="Elongation factor G"/>
    <property type="match status" value="1"/>
</dbReference>
<dbReference type="Gene3D" id="3.30.230.10">
    <property type="match status" value="1"/>
</dbReference>
<dbReference type="Gene3D" id="3.30.70.240">
    <property type="match status" value="1"/>
</dbReference>
<dbReference type="Gene3D" id="3.30.70.870">
    <property type="entry name" value="Elongation Factor G (Translational Gtpase), domain 3"/>
    <property type="match status" value="1"/>
</dbReference>
<dbReference type="Gene3D" id="3.40.50.300">
    <property type="entry name" value="P-loop containing nucleotide triphosphate hydrolases"/>
    <property type="match status" value="1"/>
</dbReference>
<dbReference type="Gene3D" id="2.40.30.10">
    <property type="entry name" value="Translation factors"/>
    <property type="match status" value="1"/>
</dbReference>
<dbReference type="HAMAP" id="MF_00054_B">
    <property type="entry name" value="EF_G_EF_2_B"/>
    <property type="match status" value="1"/>
</dbReference>
<dbReference type="InterPro" id="IPR041095">
    <property type="entry name" value="EFG_II"/>
</dbReference>
<dbReference type="InterPro" id="IPR009022">
    <property type="entry name" value="EFG_III"/>
</dbReference>
<dbReference type="InterPro" id="IPR035647">
    <property type="entry name" value="EFG_III/V"/>
</dbReference>
<dbReference type="InterPro" id="IPR047872">
    <property type="entry name" value="EFG_IV"/>
</dbReference>
<dbReference type="InterPro" id="IPR035649">
    <property type="entry name" value="EFG_V"/>
</dbReference>
<dbReference type="InterPro" id="IPR000640">
    <property type="entry name" value="EFG_V-like"/>
</dbReference>
<dbReference type="InterPro" id="IPR004161">
    <property type="entry name" value="EFTu-like_2"/>
</dbReference>
<dbReference type="InterPro" id="IPR031157">
    <property type="entry name" value="G_TR_CS"/>
</dbReference>
<dbReference type="InterPro" id="IPR027417">
    <property type="entry name" value="P-loop_NTPase"/>
</dbReference>
<dbReference type="InterPro" id="IPR020568">
    <property type="entry name" value="Ribosomal_Su5_D2-typ_SF"/>
</dbReference>
<dbReference type="InterPro" id="IPR014721">
    <property type="entry name" value="Ribsml_uS5_D2-typ_fold_subgr"/>
</dbReference>
<dbReference type="InterPro" id="IPR005225">
    <property type="entry name" value="Small_GTP-bd"/>
</dbReference>
<dbReference type="InterPro" id="IPR000795">
    <property type="entry name" value="T_Tr_GTP-bd_dom"/>
</dbReference>
<dbReference type="InterPro" id="IPR009000">
    <property type="entry name" value="Transl_B-barrel_sf"/>
</dbReference>
<dbReference type="InterPro" id="IPR004540">
    <property type="entry name" value="Transl_elong_EFG/EF2"/>
</dbReference>
<dbReference type="InterPro" id="IPR005517">
    <property type="entry name" value="Transl_elong_EFG/EF2_IV"/>
</dbReference>
<dbReference type="NCBIfam" id="TIGR00484">
    <property type="entry name" value="EF-G"/>
    <property type="match status" value="1"/>
</dbReference>
<dbReference type="NCBIfam" id="NF009381">
    <property type="entry name" value="PRK12740.1-5"/>
    <property type="match status" value="1"/>
</dbReference>
<dbReference type="NCBIfam" id="TIGR00231">
    <property type="entry name" value="small_GTP"/>
    <property type="match status" value="1"/>
</dbReference>
<dbReference type="PANTHER" id="PTHR43261:SF5">
    <property type="entry name" value="ELONGATION FACTOR G 1"/>
    <property type="match status" value="1"/>
</dbReference>
<dbReference type="PANTHER" id="PTHR43261">
    <property type="entry name" value="TRANSLATION ELONGATION FACTOR G-RELATED"/>
    <property type="match status" value="1"/>
</dbReference>
<dbReference type="Pfam" id="PF00679">
    <property type="entry name" value="EFG_C"/>
    <property type="match status" value="1"/>
</dbReference>
<dbReference type="Pfam" id="PF14492">
    <property type="entry name" value="EFG_III"/>
    <property type="match status" value="1"/>
</dbReference>
<dbReference type="Pfam" id="PF03764">
    <property type="entry name" value="EFG_IV"/>
    <property type="match status" value="1"/>
</dbReference>
<dbReference type="Pfam" id="PF00009">
    <property type="entry name" value="GTP_EFTU"/>
    <property type="match status" value="1"/>
</dbReference>
<dbReference type="Pfam" id="PF03144">
    <property type="entry name" value="GTP_EFTU_D2"/>
    <property type="match status" value="1"/>
</dbReference>
<dbReference type="PRINTS" id="PR00315">
    <property type="entry name" value="ELONGATNFCT"/>
</dbReference>
<dbReference type="SMART" id="SM00838">
    <property type="entry name" value="EFG_C"/>
    <property type="match status" value="1"/>
</dbReference>
<dbReference type="SMART" id="SM00889">
    <property type="entry name" value="EFG_IV"/>
    <property type="match status" value="1"/>
</dbReference>
<dbReference type="SUPFAM" id="SSF54980">
    <property type="entry name" value="EF-G C-terminal domain-like"/>
    <property type="match status" value="2"/>
</dbReference>
<dbReference type="SUPFAM" id="SSF52540">
    <property type="entry name" value="P-loop containing nucleoside triphosphate hydrolases"/>
    <property type="match status" value="1"/>
</dbReference>
<dbReference type="SUPFAM" id="SSF54211">
    <property type="entry name" value="Ribosomal protein S5 domain 2-like"/>
    <property type="match status" value="1"/>
</dbReference>
<dbReference type="SUPFAM" id="SSF50447">
    <property type="entry name" value="Translation proteins"/>
    <property type="match status" value="1"/>
</dbReference>
<dbReference type="PROSITE" id="PS00301">
    <property type="entry name" value="G_TR_1"/>
    <property type="match status" value="1"/>
</dbReference>
<dbReference type="PROSITE" id="PS51722">
    <property type="entry name" value="G_TR_2"/>
    <property type="match status" value="1"/>
</dbReference>
<keyword id="KW-0963">Cytoplasm</keyword>
<keyword id="KW-0251">Elongation factor</keyword>
<keyword id="KW-0342">GTP-binding</keyword>
<keyword id="KW-0547">Nucleotide-binding</keyword>
<keyword id="KW-0648">Protein biosynthesis</keyword>
<keyword id="KW-1185">Reference proteome</keyword>
<comment type="function">
    <text evidence="1">Catalyzes the GTP-dependent ribosomal translocation step during translation elongation. During this step, the ribosome changes from the pre-translocational (PRE) to the post-translocational (POST) state as the newly formed A-site-bound peptidyl-tRNA and P-site-bound deacylated tRNA move to the P and E sites, respectively. Catalyzes the coordinated movement of the two tRNA molecules, the mRNA and conformational changes in the ribosome (By similarity).</text>
</comment>
<comment type="interaction">
    <interactant intactId="EBI-862177">
        <id>P28371</id>
    </interactant>
    <interactant intactId="EBI-862916">
        <id>P52231</id>
        <label>trxA</label>
    </interactant>
    <organismsDiffer>false</organismsDiffer>
    <experiments>2</experiments>
</comment>
<comment type="subcellular location">
    <subcellularLocation>
        <location evidence="1">Cytoplasm</location>
    </subcellularLocation>
</comment>
<comment type="similarity">
    <text evidence="2">Belongs to the TRAFAC class translation factor GTPase superfamily. Classic translation factor GTPase family. EF-G/EF-2 subfamily.</text>
</comment>
<name>EFG1_SYNY3</name>
<evidence type="ECO:0000250" key="1"/>
<evidence type="ECO:0000305" key="2"/>
<proteinExistence type="evidence at protein level"/>
<feature type="chain" id="PRO_0000091243" description="Elongation factor G 1">
    <location>
        <begin position="1"/>
        <end position="695"/>
    </location>
</feature>
<feature type="domain" description="tr-type G">
    <location>
        <begin position="6"/>
        <end position="281"/>
    </location>
</feature>
<feature type="binding site" evidence="1">
    <location>
        <begin position="15"/>
        <end position="22"/>
    </location>
    <ligand>
        <name>GTP</name>
        <dbReference type="ChEBI" id="CHEBI:37565"/>
    </ligand>
</feature>
<feature type="binding site" evidence="1">
    <location>
        <begin position="79"/>
        <end position="83"/>
    </location>
    <ligand>
        <name>GTP</name>
        <dbReference type="ChEBI" id="CHEBI:37565"/>
    </ligand>
</feature>
<feature type="binding site" evidence="1">
    <location>
        <begin position="133"/>
        <end position="136"/>
    </location>
    <ligand>
        <name>GTP</name>
        <dbReference type="ChEBI" id="CHEBI:37565"/>
    </ligand>
</feature>
<feature type="sequence conflict" description="In Ref. 1; CAA46277." evidence="2" ref="1">
    <original>H</original>
    <variation>R</variation>
    <location>
        <position position="42"/>
    </location>
</feature>
<organism>
    <name type="scientific">Synechocystis sp. (strain ATCC 27184 / PCC 6803 / Kazusa)</name>
    <dbReference type="NCBI Taxonomy" id="1111708"/>
    <lineage>
        <taxon>Bacteria</taxon>
        <taxon>Bacillati</taxon>
        <taxon>Cyanobacteriota</taxon>
        <taxon>Cyanophyceae</taxon>
        <taxon>Synechococcales</taxon>
        <taxon>Merismopediaceae</taxon>
        <taxon>Synechocystis</taxon>
    </lineage>
</organism>
<accession>P28371</accession>
<accession>P74556</accession>
<sequence>MEKDLTRYRNIGIFAHVDAGKTTTTERILKLTGRIHKLGEVHEGESTMDFMEQEAERGITIQSAATSCFWKDHQLNVIDTPGHVDFTIEVYRSLKVLDGGIGVFCGSGGVEPQSETNWRYANDSKVARLIYINKLDRTGADFYRVVKQVETVLGAKPLVMTLPIGTENDFVGVVDILTEKAYIWDDSGDPEKYEITDIPADMVDDVATYREMLIETAVEQDDDLMEKYLEGEEISIDDIKRCIRTGTRKLDFFPTYGGSSFKNKGVQLVLDAVVDYLPNPKEVPPQPEVDLEGEETGNYAIVDPEAPLRALAFKIMDDRFGALTFTRIYSGTLSKGDTILNTATGKTERIGRLVEMHADSREEIESAQAGDIVAIVGMKNVQTGHTLCDPKNPATLEPMVFPDPVISIAIKPKKKGMDEKLGMALSKMVQEDPSFQVETDEESGETIIKGMGELHLDIKMDILKRTHGVEVEMGKPQVAYRESITQQVSDTYVHKKQSGGSGQYAKIDYIVEPGEPGSGFQFESKVTGGNVPREYWPAVQKGFDQSVVKGVLAGYPVVDLKVTLTDGGFHPVDSSAIAFEIAAKAGYRQSLPKAKPQILEPIMAVDVFTPEDHMGDVIGDLNRRRGMIKSQETGPMGVRVKADVPLSEMFGYIGDLRTMTSGRGQFSMVFDHYAPCPTNVAEEVIKEAKERQAAA</sequence>
<reference key="1">
    <citation type="journal article" date="1994" name="Plant Mol. Biol.">
        <title>Synechocystis sp. PCC6803 fusB gene, located outside of the str operon, encodes a polypeptide related to protein synthesis factor EF-G.</title>
        <authorList>
            <person name="Welsch P.L."/>
            <person name="Johnson D."/>
            <person name="Zhang Y."/>
            <person name="Breitenberger C.A."/>
        </authorList>
    </citation>
    <scope>NUCLEOTIDE SEQUENCE [GENOMIC DNA]</scope>
</reference>
<reference key="2">
    <citation type="journal article" date="1996" name="DNA Res.">
        <title>Sequence analysis of the genome of the unicellular cyanobacterium Synechocystis sp. strain PCC6803. II. Sequence determination of the entire genome and assignment of potential protein-coding regions.</title>
        <authorList>
            <person name="Kaneko T."/>
            <person name="Sato S."/>
            <person name="Kotani H."/>
            <person name="Tanaka A."/>
            <person name="Asamizu E."/>
            <person name="Nakamura Y."/>
            <person name="Miyajima N."/>
            <person name="Hirosawa M."/>
            <person name="Sugiura M."/>
            <person name="Sasamoto S."/>
            <person name="Kimura T."/>
            <person name="Hosouchi T."/>
            <person name="Matsuno A."/>
            <person name="Muraki A."/>
            <person name="Nakazaki N."/>
            <person name="Naruo K."/>
            <person name="Okumura S."/>
            <person name="Shimpo S."/>
            <person name="Takeuchi C."/>
            <person name="Wada T."/>
            <person name="Watanabe A."/>
            <person name="Yamada M."/>
            <person name="Yasuda M."/>
            <person name="Tabata S."/>
        </authorList>
    </citation>
    <scope>NUCLEOTIDE SEQUENCE [LARGE SCALE GENOMIC DNA]</scope>
    <source>
        <strain>ATCC 27184 / PCC 6803 / Kazusa</strain>
    </source>
</reference>
<gene>
    <name type="primary">fusA</name>
    <name type="synonym">fus</name>
    <name type="ordered locus">slr1463</name>
</gene>
<protein>
    <recommendedName>
        <fullName>Elongation factor G 1</fullName>
        <shortName>EF-G 1</shortName>
    </recommendedName>
</protein>